<gene>
    <name type="ordered locus">Sfri_3655</name>
</gene>
<evidence type="ECO:0000255" key="1">
    <source>
        <dbReference type="HAMAP-Rule" id="MF_00143"/>
    </source>
</evidence>
<sequence>MEKVFERLMYASRWIMAPIYLGLSLILFALGIKFFQEIFHIIPNIFSIKEVDLVLITLSLIDITLVGGLLIMVMFSGYENFVSQLDVGENSEKLNWLGKMDAGSLKNKVAASIVAISSIHLLKVFMNAENIANDKIMWYLLIHITFVLSAFAMGYLDKITRK</sequence>
<keyword id="KW-1003">Cell membrane</keyword>
<keyword id="KW-0472">Membrane</keyword>
<keyword id="KW-1185">Reference proteome</keyword>
<keyword id="KW-0812">Transmembrane</keyword>
<keyword id="KW-1133">Transmembrane helix</keyword>
<proteinExistence type="inferred from homology"/>
<protein>
    <recommendedName>
        <fullName evidence="1">UPF0114 protein Sfri_3655</fullName>
    </recommendedName>
</protein>
<organism>
    <name type="scientific">Shewanella frigidimarina (strain NCIMB 400)</name>
    <dbReference type="NCBI Taxonomy" id="318167"/>
    <lineage>
        <taxon>Bacteria</taxon>
        <taxon>Pseudomonadati</taxon>
        <taxon>Pseudomonadota</taxon>
        <taxon>Gammaproteobacteria</taxon>
        <taxon>Alteromonadales</taxon>
        <taxon>Shewanellaceae</taxon>
        <taxon>Shewanella</taxon>
    </lineage>
</organism>
<dbReference type="EMBL" id="CP000447">
    <property type="protein sequence ID" value="ABI73482.1"/>
    <property type="molecule type" value="Genomic_DNA"/>
</dbReference>
<dbReference type="RefSeq" id="WP_011639070.1">
    <property type="nucleotide sequence ID" value="NC_008345.1"/>
</dbReference>
<dbReference type="STRING" id="318167.Sfri_3655"/>
<dbReference type="KEGG" id="sfr:Sfri_3655"/>
<dbReference type="eggNOG" id="COG2862">
    <property type="taxonomic scope" value="Bacteria"/>
</dbReference>
<dbReference type="HOGENOM" id="CLU_097887_1_1_6"/>
<dbReference type="OrthoDB" id="9783569at2"/>
<dbReference type="Proteomes" id="UP000000684">
    <property type="component" value="Chromosome"/>
</dbReference>
<dbReference type="GO" id="GO:0005886">
    <property type="term" value="C:plasma membrane"/>
    <property type="evidence" value="ECO:0007669"/>
    <property type="project" value="UniProtKB-SubCell"/>
</dbReference>
<dbReference type="HAMAP" id="MF_00143">
    <property type="entry name" value="UPF0114"/>
    <property type="match status" value="1"/>
</dbReference>
<dbReference type="InterPro" id="IPR005134">
    <property type="entry name" value="UPF0114"/>
</dbReference>
<dbReference type="InterPro" id="IPR020761">
    <property type="entry name" value="UPF0114_bac"/>
</dbReference>
<dbReference type="NCBIfam" id="TIGR00645">
    <property type="entry name" value="HI0507"/>
    <property type="match status" value="1"/>
</dbReference>
<dbReference type="PANTHER" id="PTHR38596">
    <property type="entry name" value="UPF0114 PROTEIN YQHA"/>
    <property type="match status" value="1"/>
</dbReference>
<dbReference type="PANTHER" id="PTHR38596:SF1">
    <property type="entry name" value="UPF0114 PROTEIN YQHA"/>
    <property type="match status" value="1"/>
</dbReference>
<dbReference type="Pfam" id="PF03350">
    <property type="entry name" value="UPF0114"/>
    <property type="match status" value="1"/>
</dbReference>
<name>Y3655_SHEFN</name>
<comment type="subcellular location">
    <subcellularLocation>
        <location evidence="1">Cell membrane</location>
        <topology evidence="1">Multi-pass membrane protein</topology>
    </subcellularLocation>
</comment>
<comment type="similarity">
    <text evidence="1">Belongs to the UPF0114 family.</text>
</comment>
<reference key="1">
    <citation type="submission" date="2006-08" db="EMBL/GenBank/DDBJ databases">
        <title>Complete sequence of Shewanella frigidimarina NCIMB 400.</title>
        <authorList>
            <consortium name="US DOE Joint Genome Institute"/>
            <person name="Copeland A."/>
            <person name="Lucas S."/>
            <person name="Lapidus A."/>
            <person name="Barry K."/>
            <person name="Detter J.C."/>
            <person name="Glavina del Rio T."/>
            <person name="Hammon N."/>
            <person name="Israni S."/>
            <person name="Dalin E."/>
            <person name="Tice H."/>
            <person name="Pitluck S."/>
            <person name="Fredrickson J.K."/>
            <person name="Kolker E."/>
            <person name="McCuel L.A."/>
            <person name="DiChristina T."/>
            <person name="Nealson K.H."/>
            <person name="Newman D."/>
            <person name="Tiedje J.M."/>
            <person name="Zhou J."/>
            <person name="Romine M.F."/>
            <person name="Culley D.E."/>
            <person name="Serres M."/>
            <person name="Chertkov O."/>
            <person name="Brettin T."/>
            <person name="Bruce D."/>
            <person name="Han C."/>
            <person name="Tapia R."/>
            <person name="Gilna P."/>
            <person name="Schmutz J."/>
            <person name="Larimer F."/>
            <person name="Land M."/>
            <person name="Hauser L."/>
            <person name="Kyrpides N."/>
            <person name="Mikhailova N."/>
            <person name="Richardson P."/>
        </authorList>
    </citation>
    <scope>NUCLEOTIDE SEQUENCE [LARGE SCALE GENOMIC DNA]</scope>
    <source>
        <strain>NCIMB 400</strain>
    </source>
</reference>
<feature type="chain" id="PRO_1000009493" description="UPF0114 protein Sfri_3655">
    <location>
        <begin position="1"/>
        <end position="162"/>
    </location>
</feature>
<feature type="transmembrane region" description="Helical" evidence="1">
    <location>
        <begin position="15"/>
        <end position="35"/>
    </location>
</feature>
<feature type="transmembrane region" description="Helical" evidence="1">
    <location>
        <begin position="53"/>
        <end position="73"/>
    </location>
</feature>
<feature type="transmembrane region" description="Helical" evidence="1">
    <location>
        <begin position="136"/>
        <end position="156"/>
    </location>
</feature>
<accession>Q07WY2</accession>